<accession>B8FRG4</accession>
<organism>
    <name type="scientific">Desulfitobacterium hafniense (strain DSM 10664 / DCB-2)</name>
    <dbReference type="NCBI Taxonomy" id="272564"/>
    <lineage>
        <taxon>Bacteria</taxon>
        <taxon>Bacillati</taxon>
        <taxon>Bacillota</taxon>
        <taxon>Clostridia</taxon>
        <taxon>Eubacteriales</taxon>
        <taxon>Desulfitobacteriaceae</taxon>
        <taxon>Desulfitobacterium</taxon>
    </lineage>
</organism>
<comment type="function">
    <text evidence="1">Associates with the EF-Tu.GDP complex and induces the exchange of GDP to GTP. It remains bound to the aminoacyl-tRNA.EF-Tu.GTP complex up to the GTP hydrolysis stage on the ribosome.</text>
</comment>
<comment type="subcellular location">
    <subcellularLocation>
        <location evidence="1">Cytoplasm</location>
    </subcellularLocation>
</comment>
<comment type="similarity">
    <text evidence="1">Belongs to the EF-Ts family.</text>
</comment>
<dbReference type="EMBL" id="CP001336">
    <property type="protein sequence ID" value="ACL21724.1"/>
    <property type="molecule type" value="Genomic_DNA"/>
</dbReference>
<dbReference type="RefSeq" id="WP_005810670.1">
    <property type="nucleotide sequence ID" value="NC_011830.1"/>
</dbReference>
<dbReference type="SMR" id="B8FRG4"/>
<dbReference type="KEGG" id="dhd:Dhaf_3708"/>
<dbReference type="HOGENOM" id="CLU_047155_1_1_9"/>
<dbReference type="Proteomes" id="UP000007726">
    <property type="component" value="Chromosome"/>
</dbReference>
<dbReference type="GO" id="GO:0005737">
    <property type="term" value="C:cytoplasm"/>
    <property type="evidence" value="ECO:0007669"/>
    <property type="project" value="UniProtKB-SubCell"/>
</dbReference>
<dbReference type="GO" id="GO:0003746">
    <property type="term" value="F:translation elongation factor activity"/>
    <property type="evidence" value="ECO:0007669"/>
    <property type="project" value="UniProtKB-UniRule"/>
</dbReference>
<dbReference type="CDD" id="cd14275">
    <property type="entry name" value="UBA_EF-Ts"/>
    <property type="match status" value="1"/>
</dbReference>
<dbReference type="FunFam" id="1.10.286.20:FF:000003">
    <property type="entry name" value="Elongation factor Ts"/>
    <property type="match status" value="1"/>
</dbReference>
<dbReference type="FunFam" id="1.10.8.10:FF:000001">
    <property type="entry name" value="Elongation factor Ts"/>
    <property type="match status" value="1"/>
</dbReference>
<dbReference type="Gene3D" id="1.10.286.20">
    <property type="match status" value="1"/>
</dbReference>
<dbReference type="Gene3D" id="1.10.8.10">
    <property type="entry name" value="DNA helicase RuvA subunit, C-terminal domain"/>
    <property type="match status" value="1"/>
</dbReference>
<dbReference type="Gene3D" id="3.30.479.20">
    <property type="entry name" value="Elongation factor Ts, dimerisation domain"/>
    <property type="match status" value="1"/>
</dbReference>
<dbReference type="HAMAP" id="MF_00050">
    <property type="entry name" value="EF_Ts"/>
    <property type="match status" value="1"/>
</dbReference>
<dbReference type="InterPro" id="IPR036402">
    <property type="entry name" value="EF-Ts_dimer_sf"/>
</dbReference>
<dbReference type="InterPro" id="IPR001816">
    <property type="entry name" value="Transl_elong_EFTs/EF1B"/>
</dbReference>
<dbReference type="InterPro" id="IPR014039">
    <property type="entry name" value="Transl_elong_EFTs/EF1B_dimer"/>
</dbReference>
<dbReference type="InterPro" id="IPR018101">
    <property type="entry name" value="Transl_elong_Ts_CS"/>
</dbReference>
<dbReference type="InterPro" id="IPR009060">
    <property type="entry name" value="UBA-like_sf"/>
</dbReference>
<dbReference type="NCBIfam" id="TIGR00116">
    <property type="entry name" value="tsf"/>
    <property type="match status" value="2"/>
</dbReference>
<dbReference type="PANTHER" id="PTHR11741">
    <property type="entry name" value="ELONGATION FACTOR TS"/>
    <property type="match status" value="1"/>
</dbReference>
<dbReference type="PANTHER" id="PTHR11741:SF0">
    <property type="entry name" value="ELONGATION FACTOR TS, MITOCHONDRIAL"/>
    <property type="match status" value="1"/>
</dbReference>
<dbReference type="Pfam" id="PF00889">
    <property type="entry name" value="EF_TS"/>
    <property type="match status" value="1"/>
</dbReference>
<dbReference type="SUPFAM" id="SSF54713">
    <property type="entry name" value="Elongation factor Ts (EF-Ts), dimerisation domain"/>
    <property type="match status" value="1"/>
</dbReference>
<dbReference type="SUPFAM" id="SSF46934">
    <property type="entry name" value="UBA-like"/>
    <property type="match status" value="1"/>
</dbReference>
<dbReference type="PROSITE" id="PS01126">
    <property type="entry name" value="EF_TS_1"/>
    <property type="match status" value="1"/>
</dbReference>
<dbReference type="PROSITE" id="PS01127">
    <property type="entry name" value="EF_TS_2"/>
    <property type="match status" value="1"/>
</dbReference>
<proteinExistence type="inferred from homology"/>
<gene>
    <name evidence="1" type="primary">tsf</name>
    <name type="ordered locus">Dhaf_3708</name>
</gene>
<keyword id="KW-0963">Cytoplasm</keyword>
<keyword id="KW-0251">Elongation factor</keyword>
<keyword id="KW-0648">Protein biosynthesis</keyword>
<reference key="1">
    <citation type="journal article" date="2012" name="BMC Microbiol.">
        <title>Genome sequence of Desulfitobacterium hafniense DCB-2, a Gram-positive anaerobe capable of dehalogenation and metal reduction.</title>
        <authorList>
            <person name="Kim S.H."/>
            <person name="Harzman C."/>
            <person name="Davis J.K."/>
            <person name="Hutcheson R."/>
            <person name="Broderick J.B."/>
            <person name="Marsh T.L."/>
            <person name="Tiedje J.M."/>
        </authorList>
    </citation>
    <scope>NUCLEOTIDE SEQUENCE [LARGE SCALE GENOMIC DNA]</scope>
    <source>
        <strain>DSM 10664 / DCB-2</strain>
    </source>
</reference>
<evidence type="ECO:0000255" key="1">
    <source>
        <dbReference type="HAMAP-Rule" id="MF_00050"/>
    </source>
</evidence>
<name>EFTS_DESHD</name>
<feature type="chain" id="PRO_1000117576" description="Elongation factor Ts">
    <location>
        <begin position="1"/>
        <end position="217"/>
    </location>
</feature>
<feature type="region of interest" description="Involved in Mg(2+) ion dislocation from EF-Tu" evidence="1">
    <location>
        <begin position="82"/>
        <end position="85"/>
    </location>
</feature>
<protein>
    <recommendedName>
        <fullName evidence="1">Elongation factor Ts</fullName>
        <shortName evidence="1">EF-Ts</shortName>
    </recommendedName>
</protein>
<sequence length="217" mass="24367">MAEVTAAQVKELRERTGAGMMDCKKALNEVGGNMDKAIDFLREKGLAAAAKKEGRIAAEGIVEAYIHGGGRIGVMLELNCETDFVANTDGFKQFARDIALQIAAAKPRYLAKADVPEEELEHEKNILRAQALNEGKPEKIVDKMVEGRISKFYKEVCLLEQEFVKDPDKTINDLVLEKTAKIGERIVIRRFTRYEMGEGIEKREEDFAAEVMKEMNR</sequence>